<feature type="chain" id="PRO_0000290967" description="Small ribosomal subunit protein uS8">
    <location>
        <begin position="1"/>
        <end position="130"/>
    </location>
</feature>
<name>RS8_METBU</name>
<sequence length="130" mass="14300">MVLLDPLADALSIIKNAEAVGKDSCTIRPASKLIGNVLKVMNDRGYIGDFEFVEDGKAGVYTVELIGRINKCGAIKPRYSVGVTEFERWEKQFLPAKNFGVLILTTPKGVISQYEARENNVGGQLLSFVY</sequence>
<organism>
    <name type="scientific">Methanococcoides burtonii (strain DSM 6242 / NBRC 107633 / OCM 468 / ACE-M)</name>
    <dbReference type="NCBI Taxonomy" id="259564"/>
    <lineage>
        <taxon>Archaea</taxon>
        <taxon>Methanobacteriati</taxon>
        <taxon>Methanobacteriota</taxon>
        <taxon>Stenosarchaea group</taxon>
        <taxon>Methanomicrobia</taxon>
        <taxon>Methanosarcinales</taxon>
        <taxon>Methanosarcinaceae</taxon>
        <taxon>Methanococcoides</taxon>
    </lineage>
</organism>
<dbReference type="EMBL" id="CP000300">
    <property type="protein sequence ID" value="ABE51040.1"/>
    <property type="molecule type" value="Genomic_DNA"/>
</dbReference>
<dbReference type="RefSeq" id="WP_011498204.1">
    <property type="nucleotide sequence ID" value="NC_007955.1"/>
</dbReference>
<dbReference type="SMR" id="Q12ZT6"/>
<dbReference type="STRING" id="259564.Mbur_0016"/>
<dbReference type="GeneID" id="3996916"/>
<dbReference type="KEGG" id="mbu:Mbur_0016"/>
<dbReference type="HOGENOM" id="CLU_098428_1_1_2"/>
<dbReference type="OrthoDB" id="5670at2157"/>
<dbReference type="Proteomes" id="UP000001979">
    <property type="component" value="Chromosome"/>
</dbReference>
<dbReference type="GO" id="GO:1990904">
    <property type="term" value="C:ribonucleoprotein complex"/>
    <property type="evidence" value="ECO:0007669"/>
    <property type="project" value="UniProtKB-KW"/>
</dbReference>
<dbReference type="GO" id="GO:0005840">
    <property type="term" value="C:ribosome"/>
    <property type="evidence" value="ECO:0007669"/>
    <property type="project" value="UniProtKB-KW"/>
</dbReference>
<dbReference type="GO" id="GO:0019843">
    <property type="term" value="F:rRNA binding"/>
    <property type="evidence" value="ECO:0007669"/>
    <property type="project" value="UniProtKB-UniRule"/>
</dbReference>
<dbReference type="GO" id="GO:0003735">
    <property type="term" value="F:structural constituent of ribosome"/>
    <property type="evidence" value="ECO:0007669"/>
    <property type="project" value="InterPro"/>
</dbReference>
<dbReference type="GO" id="GO:0006412">
    <property type="term" value="P:translation"/>
    <property type="evidence" value="ECO:0007669"/>
    <property type="project" value="UniProtKB-UniRule"/>
</dbReference>
<dbReference type="FunFam" id="3.30.1370.30:FF:000001">
    <property type="entry name" value="40S ribosomal protein S15a"/>
    <property type="match status" value="1"/>
</dbReference>
<dbReference type="FunFam" id="3.30.1490.10:FF:000002">
    <property type="entry name" value="40S ribosomal protein S15a"/>
    <property type="match status" value="1"/>
</dbReference>
<dbReference type="Gene3D" id="3.30.1370.30">
    <property type="match status" value="1"/>
</dbReference>
<dbReference type="Gene3D" id="3.30.1490.10">
    <property type="match status" value="1"/>
</dbReference>
<dbReference type="HAMAP" id="MF_01302_A">
    <property type="entry name" value="Ribosomal_uS8_A"/>
    <property type="match status" value="1"/>
</dbReference>
<dbReference type="InterPro" id="IPR000630">
    <property type="entry name" value="Ribosomal_uS8"/>
</dbReference>
<dbReference type="InterPro" id="IPR047863">
    <property type="entry name" value="Ribosomal_uS8_CS"/>
</dbReference>
<dbReference type="InterPro" id="IPR035987">
    <property type="entry name" value="Ribosomal_uS8_sf"/>
</dbReference>
<dbReference type="NCBIfam" id="NF003115">
    <property type="entry name" value="PRK04034.1"/>
    <property type="match status" value="1"/>
</dbReference>
<dbReference type="PANTHER" id="PTHR11758">
    <property type="entry name" value="40S RIBOSOMAL PROTEIN S15A"/>
    <property type="match status" value="1"/>
</dbReference>
<dbReference type="Pfam" id="PF00410">
    <property type="entry name" value="Ribosomal_S8"/>
    <property type="match status" value="1"/>
</dbReference>
<dbReference type="SUPFAM" id="SSF56047">
    <property type="entry name" value="Ribosomal protein S8"/>
    <property type="match status" value="1"/>
</dbReference>
<dbReference type="PROSITE" id="PS00053">
    <property type="entry name" value="RIBOSOMAL_S8"/>
    <property type="match status" value="1"/>
</dbReference>
<proteinExistence type="inferred from homology"/>
<gene>
    <name evidence="1" type="primary">rps8</name>
    <name type="ordered locus">Mbur_0016</name>
</gene>
<protein>
    <recommendedName>
        <fullName evidence="1">Small ribosomal subunit protein uS8</fullName>
    </recommendedName>
    <alternativeName>
        <fullName evidence="2">30S ribosomal protein S8</fullName>
    </alternativeName>
</protein>
<accession>Q12ZT6</accession>
<evidence type="ECO:0000255" key="1">
    <source>
        <dbReference type="HAMAP-Rule" id="MF_01302"/>
    </source>
</evidence>
<evidence type="ECO:0000305" key="2"/>
<reference key="1">
    <citation type="journal article" date="2009" name="ISME J.">
        <title>The genome sequence of the psychrophilic archaeon, Methanococcoides burtonii: the role of genome evolution in cold adaptation.</title>
        <authorList>
            <person name="Allen M.A."/>
            <person name="Lauro F.M."/>
            <person name="Williams T.J."/>
            <person name="Burg D."/>
            <person name="Siddiqui K.S."/>
            <person name="De Francisci D."/>
            <person name="Chong K.W."/>
            <person name="Pilak O."/>
            <person name="Chew H.H."/>
            <person name="De Maere M.Z."/>
            <person name="Ting L."/>
            <person name="Katrib M."/>
            <person name="Ng C."/>
            <person name="Sowers K.R."/>
            <person name="Galperin M.Y."/>
            <person name="Anderson I.J."/>
            <person name="Ivanova N."/>
            <person name="Dalin E."/>
            <person name="Martinez M."/>
            <person name="Lapidus A."/>
            <person name="Hauser L."/>
            <person name="Land M."/>
            <person name="Thomas T."/>
            <person name="Cavicchioli R."/>
        </authorList>
    </citation>
    <scope>NUCLEOTIDE SEQUENCE [LARGE SCALE GENOMIC DNA]</scope>
    <source>
        <strain>DSM 6242 / NBRC 107633 / OCM 468 / ACE-M</strain>
    </source>
</reference>
<keyword id="KW-0687">Ribonucleoprotein</keyword>
<keyword id="KW-0689">Ribosomal protein</keyword>
<keyword id="KW-0694">RNA-binding</keyword>
<keyword id="KW-0699">rRNA-binding</keyword>
<comment type="function">
    <text evidence="1">One of the primary rRNA binding proteins, it binds directly to 16S rRNA central domain where it helps coordinate assembly of the platform of the 30S subunit.</text>
</comment>
<comment type="subunit">
    <text evidence="1">Part of the 30S ribosomal subunit.</text>
</comment>
<comment type="similarity">
    <text evidence="1">Belongs to the universal ribosomal protein uS8 family.</text>
</comment>